<dbReference type="EMBL" id="CU329672">
    <property type="protein sequence ID" value="CAA18999.2"/>
    <property type="molecule type" value="Genomic_DNA"/>
</dbReference>
<dbReference type="PIR" id="T40829">
    <property type="entry name" value="T40829"/>
</dbReference>
<dbReference type="SMR" id="O59764"/>
<dbReference type="BioGRID" id="275552">
    <property type="interactions" value="6"/>
</dbReference>
<dbReference type="FunCoup" id="O59764">
    <property type="interactions" value="220"/>
</dbReference>
<dbReference type="STRING" id="284812.O59764"/>
<dbReference type="PaxDb" id="4896-SPCC1020.11c.1"/>
<dbReference type="EnsemblFungi" id="SPCC1020.11c.1">
    <property type="protein sequence ID" value="SPCC1020.11c.1:pep"/>
    <property type="gene ID" value="SPCC1020.11c"/>
</dbReference>
<dbReference type="KEGG" id="spo:2538978"/>
<dbReference type="PomBase" id="SPCC1020.11c"/>
<dbReference type="VEuPathDB" id="FungiDB:SPCC1020.11c"/>
<dbReference type="eggNOG" id="KOG4455">
    <property type="taxonomic scope" value="Eukaryota"/>
</dbReference>
<dbReference type="HOGENOM" id="CLU_110781_4_0_1"/>
<dbReference type="InParanoid" id="O59764"/>
<dbReference type="OMA" id="YPGFLFY"/>
<dbReference type="PhylomeDB" id="O59764"/>
<dbReference type="PRO" id="PR:O59764"/>
<dbReference type="Proteomes" id="UP000002485">
    <property type="component" value="Chromosome III"/>
</dbReference>
<dbReference type="GO" id="GO:0072546">
    <property type="term" value="C:EMC complex"/>
    <property type="evidence" value="ECO:0000318"/>
    <property type="project" value="GO_Central"/>
</dbReference>
<dbReference type="GO" id="GO:0005783">
    <property type="term" value="C:endoplasmic reticulum"/>
    <property type="evidence" value="ECO:0007005"/>
    <property type="project" value="PomBase"/>
</dbReference>
<dbReference type="GO" id="GO:0000045">
    <property type="term" value="P:autophagosome assembly"/>
    <property type="evidence" value="ECO:0000318"/>
    <property type="project" value="GO_Central"/>
</dbReference>
<dbReference type="GO" id="GO:0045048">
    <property type="term" value="P:protein insertion into ER membrane"/>
    <property type="evidence" value="ECO:0000305"/>
    <property type="project" value="PomBase"/>
</dbReference>
<dbReference type="InterPro" id="IPR008504">
    <property type="entry name" value="Emc6"/>
</dbReference>
<dbReference type="InterPro" id="IPR029008">
    <property type="entry name" value="EMC6-like"/>
</dbReference>
<dbReference type="PANTHER" id="PTHR20994">
    <property type="entry name" value="ER MEMBRANE PROTEIN COMPLEX SUBUNIT 6"/>
    <property type="match status" value="1"/>
</dbReference>
<dbReference type="PANTHER" id="PTHR20994:SF0">
    <property type="entry name" value="ER MEMBRANE PROTEIN COMPLEX SUBUNIT 6"/>
    <property type="match status" value="1"/>
</dbReference>
<dbReference type="Pfam" id="PF07019">
    <property type="entry name" value="EMC6"/>
    <property type="match status" value="1"/>
</dbReference>
<proteinExistence type="inferred from homology"/>
<reference key="1">
    <citation type="journal article" date="2002" name="Nature">
        <title>The genome sequence of Schizosaccharomyces pombe.</title>
        <authorList>
            <person name="Wood V."/>
            <person name="Gwilliam R."/>
            <person name="Rajandream M.A."/>
            <person name="Lyne M.H."/>
            <person name="Lyne R."/>
            <person name="Stewart A."/>
            <person name="Sgouros J.G."/>
            <person name="Peat N."/>
            <person name="Hayles J."/>
            <person name="Baker S.G."/>
            <person name="Basham D."/>
            <person name="Bowman S."/>
            <person name="Brooks K."/>
            <person name="Brown D."/>
            <person name="Brown S."/>
            <person name="Chillingworth T."/>
            <person name="Churcher C.M."/>
            <person name="Collins M."/>
            <person name="Connor R."/>
            <person name="Cronin A."/>
            <person name="Davis P."/>
            <person name="Feltwell T."/>
            <person name="Fraser A."/>
            <person name="Gentles S."/>
            <person name="Goble A."/>
            <person name="Hamlin N."/>
            <person name="Harris D.E."/>
            <person name="Hidalgo J."/>
            <person name="Hodgson G."/>
            <person name="Holroyd S."/>
            <person name="Hornsby T."/>
            <person name="Howarth S."/>
            <person name="Huckle E.J."/>
            <person name="Hunt S."/>
            <person name="Jagels K."/>
            <person name="James K.D."/>
            <person name="Jones L."/>
            <person name="Jones M."/>
            <person name="Leather S."/>
            <person name="McDonald S."/>
            <person name="McLean J."/>
            <person name="Mooney P."/>
            <person name="Moule S."/>
            <person name="Mungall K.L."/>
            <person name="Murphy L.D."/>
            <person name="Niblett D."/>
            <person name="Odell C."/>
            <person name="Oliver K."/>
            <person name="O'Neil S."/>
            <person name="Pearson D."/>
            <person name="Quail M.A."/>
            <person name="Rabbinowitsch E."/>
            <person name="Rutherford K.M."/>
            <person name="Rutter S."/>
            <person name="Saunders D."/>
            <person name="Seeger K."/>
            <person name="Sharp S."/>
            <person name="Skelton J."/>
            <person name="Simmonds M.N."/>
            <person name="Squares R."/>
            <person name="Squares S."/>
            <person name="Stevens K."/>
            <person name="Taylor K."/>
            <person name="Taylor R.G."/>
            <person name="Tivey A."/>
            <person name="Walsh S.V."/>
            <person name="Warren T."/>
            <person name="Whitehead S."/>
            <person name="Woodward J.R."/>
            <person name="Volckaert G."/>
            <person name="Aert R."/>
            <person name="Robben J."/>
            <person name="Grymonprez B."/>
            <person name="Weltjens I."/>
            <person name="Vanstreels E."/>
            <person name="Rieger M."/>
            <person name="Schaefer M."/>
            <person name="Mueller-Auer S."/>
            <person name="Gabel C."/>
            <person name="Fuchs M."/>
            <person name="Duesterhoeft A."/>
            <person name="Fritzc C."/>
            <person name="Holzer E."/>
            <person name="Moestl D."/>
            <person name="Hilbert H."/>
            <person name="Borzym K."/>
            <person name="Langer I."/>
            <person name="Beck A."/>
            <person name="Lehrach H."/>
            <person name="Reinhardt R."/>
            <person name="Pohl T.M."/>
            <person name="Eger P."/>
            <person name="Zimmermann W."/>
            <person name="Wedler H."/>
            <person name="Wambutt R."/>
            <person name="Purnelle B."/>
            <person name="Goffeau A."/>
            <person name="Cadieu E."/>
            <person name="Dreano S."/>
            <person name="Gloux S."/>
            <person name="Lelaure V."/>
            <person name="Mottier S."/>
            <person name="Galibert F."/>
            <person name="Aves S.J."/>
            <person name="Xiang Z."/>
            <person name="Hunt C."/>
            <person name="Moore K."/>
            <person name="Hurst S.M."/>
            <person name="Lucas M."/>
            <person name="Rochet M."/>
            <person name="Gaillardin C."/>
            <person name="Tallada V.A."/>
            <person name="Garzon A."/>
            <person name="Thode G."/>
            <person name="Daga R.R."/>
            <person name="Cruzado L."/>
            <person name="Jimenez J."/>
            <person name="Sanchez M."/>
            <person name="del Rey F."/>
            <person name="Benito J."/>
            <person name="Dominguez A."/>
            <person name="Revuelta J.L."/>
            <person name="Moreno S."/>
            <person name="Armstrong J."/>
            <person name="Forsburg S.L."/>
            <person name="Cerutti L."/>
            <person name="Lowe T."/>
            <person name="McCombie W.R."/>
            <person name="Paulsen I."/>
            <person name="Potashkin J."/>
            <person name="Shpakovski G.V."/>
            <person name="Ussery D."/>
            <person name="Barrell B.G."/>
            <person name="Nurse P."/>
        </authorList>
    </citation>
    <scope>NUCLEOTIDE SEQUENCE [LARGE SCALE GENOMIC DNA]</scope>
    <source>
        <strain>972 / ATCC 24843</strain>
    </source>
</reference>
<reference key="2">
    <citation type="journal article" date="2006" name="Nat. Biotechnol.">
        <title>ORFeome cloning and global analysis of protein localization in the fission yeast Schizosaccharomyces pombe.</title>
        <authorList>
            <person name="Matsuyama A."/>
            <person name="Arai R."/>
            <person name="Yashiroda Y."/>
            <person name="Shirai A."/>
            <person name="Kamata A."/>
            <person name="Sekido S."/>
            <person name="Kobayashi Y."/>
            <person name="Hashimoto A."/>
            <person name="Hamamoto M."/>
            <person name="Hiraoka Y."/>
            <person name="Horinouchi S."/>
            <person name="Yoshida M."/>
        </authorList>
    </citation>
    <scope>SUBCELLULAR LOCATION [LARGE SCALE ANALYSIS]</scope>
</reference>
<feature type="chain" id="PRO_0000340112" description="ER membrane protein complex subunit 6">
    <location>
        <begin position="1"/>
        <end position="108"/>
    </location>
</feature>
<feature type="transmembrane region" description="Helical" evidence="1">
    <location>
        <begin position="21"/>
        <end position="41"/>
    </location>
</feature>
<feature type="transmembrane region" description="Helical" evidence="1">
    <location>
        <begin position="45"/>
        <end position="65"/>
    </location>
</feature>
<feature type="transmembrane region" description="Helical" evidence="1">
    <location>
        <begin position="86"/>
        <end position="106"/>
    </location>
</feature>
<evidence type="ECO:0000255" key="1"/>
<evidence type="ECO:0000269" key="2">
    <source>
    </source>
</evidence>
<evidence type="ECO:0000305" key="3"/>
<protein>
    <recommendedName>
        <fullName>ER membrane protein complex subunit 6</fullName>
    </recommendedName>
</protein>
<keyword id="KW-0256">Endoplasmic reticulum</keyword>
<keyword id="KW-0472">Membrane</keyword>
<keyword id="KW-1185">Reference proteome</keyword>
<keyword id="KW-0812">Transmembrane</keyword>
<keyword id="KW-1133">Transmembrane helix</keyword>
<organism>
    <name type="scientific">Schizosaccharomyces pombe (strain 972 / ATCC 24843)</name>
    <name type="common">Fission yeast</name>
    <dbReference type="NCBI Taxonomy" id="284812"/>
    <lineage>
        <taxon>Eukaryota</taxon>
        <taxon>Fungi</taxon>
        <taxon>Dikarya</taxon>
        <taxon>Ascomycota</taxon>
        <taxon>Taphrinomycotina</taxon>
        <taxon>Schizosaccharomycetes</taxon>
        <taxon>Schizosaccharomycetales</taxon>
        <taxon>Schizosaccharomycetaceae</taxon>
        <taxon>Schizosaccharomyces</taxon>
    </lineage>
</organism>
<sequence length="108" mass="12288">MERDKGVAPIVVENVAYNEQVVSFVRNLTSSFFGCAAGILGLTSYEGLALYVLGYFFVSFLLFALKMRGNLTKYYQPGYKFWIAKILDGAPSYVLTWTLFYSLVYVYE</sequence>
<gene>
    <name type="ORF">SPCC1020.11c</name>
</gene>
<comment type="subcellular location">
    <subcellularLocation>
        <location evidence="2">Endoplasmic reticulum membrane</location>
        <topology evidence="2">Multi-pass membrane protein</topology>
    </subcellularLocation>
</comment>
<comment type="similarity">
    <text evidence="3">Belongs to the EMC6 family.</text>
</comment>
<accession>O59764</accession>
<name>YJMB_SCHPO</name>